<protein>
    <recommendedName>
        <fullName evidence="1">Protein TsgA homolog</fullName>
    </recommendedName>
</protein>
<reference key="1">
    <citation type="journal article" date="2003" name="Proc. Natl. Acad. Sci. U.S.A.">
        <title>Reductive genome evolution in Buchnera aphidicola.</title>
        <authorList>
            <person name="van Ham R.C.H.J."/>
            <person name="Kamerbeek J."/>
            <person name="Palacios C."/>
            <person name="Rausell C."/>
            <person name="Abascal F."/>
            <person name="Bastolla U."/>
            <person name="Fernandez J.M."/>
            <person name="Jimenez L."/>
            <person name="Postigo M."/>
            <person name="Silva F.J."/>
            <person name="Tamames J."/>
            <person name="Viguera E."/>
            <person name="Latorre A."/>
            <person name="Valencia A."/>
            <person name="Moran F."/>
            <person name="Moya A."/>
        </authorList>
    </citation>
    <scope>NUCLEOTIDE SEQUENCE [LARGE SCALE GENOMIC DNA]</scope>
    <source>
        <strain>Bp</strain>
    </source>
</reference>
<dbReference type="EMBL" id="AE016826">
    <property type="protein sequence ID" value="AAO27183.1"/>
    <property type="molecule type" value="Genomic_DNA"/>
</dbReference>
<dbReference type="SMR" id="Q89A60"/>
<dbReference type="STRING" id="224915.bbp_477"/>
<dbReference type="KEGG" id="bab:bbp_477"/>
<dbReference type="eggNOG" id="COG0738">
    <property type="taxonomic scope" value="Bacteria"/>
</dbReference>
<dbReference type="HOGENOM" id="CLU_056916_0_0_6"/>
<dbReference type="OrthoDB" id="8577032at2"/>
<dbReference type="Proteomes" id="UP000000601">
    <property type="component" value="Chromosome"/>
</dbReference>
<dbReference type="GO" id="GO:0005886">
    <property type="term" value="C:plasma membrane"/>
    <property type="evidence" value="ECO:0007669"/>
    <property type="project" value="UniProtKB-SubCell"/>
</dbReference>
<dbReference type="GO" id="GO:0022857">
    <property type="term" value="F:transmembrane transporter activity"/>
    <property type="evidence" value="ECO:0007669"/>
    <property type="project" value="InterPro"/>
</dbReference>
<dbReference type="Gene3D" id="1.20.1250.20">
    <property type="entry name" value="MFS general substrate transporter like domains"/>
    <property type="match status" value="2"/>
</dbReference>
<dbReference type="HAMAP" id="MF_01044">
    <property type="entry name" value="MFS_TsgA"/>
    <property type="match status" value="1"/>
</dbReference>
<dbReference type="InterPro" id="IPR011701">
    <property type="entry name" value="MFS"/>
</dbReference>
<dbReference type="InterPro" id="IPR020846">
    <property type="entry name" value="MFS_dom"/>
</dbReference>
<dbReference type="InterPro" id="IPR036259">
    <property type="entry name" value="MFS_trans_sf"/>
</dbReference>
<dbReference type="InterPro" id="IPR023528">
    <property type="entry name" value="MFS_TsgA"/>
</dbReference>
<dbReference type="InterPro" id="IPR050375">
    <property type="entry name" value="MFS_TsgA-like"/>
</dbReference>
<dbReference type="NCBIfam" id="NF002982">
    <property type="entry name" value="PRK03699.1"/>
    <property type="match status" value="1"/>
</dbReference>
<dbReference type="PANTHER" id="PTHR43702">
    <property type="entry name" value="L-FUCOSE-PROTON SYMPORTER"/>
    <property type="match status" value="1"/>
</dbReference>
<dbReference type="PANTHER" id="PTHR43702:SF3">
    <property type="entry name" value="PROTEIN TSGA"/>
    <property type="match status" value="1"/>
</dbReference>
<dbReference type="Pfam" id="PF07690">
    <property type="entry name" value="MFS_1"/>
    <property type="match status" value="1"/>
</dbReference>
<dbReference type="SUPFAM" id="SSF103473">
    <property type="entry name" value="MFS general substrate transporter"/>
    <property type="match status" value="1"/>
</dbReference>
<dbReference type="PROSITE" id="PS50850">
    <property type="entry name" value="MFS"/>
    <property type="match status" value="1"/>
</dbReference>
<name>TSGA_BUCBP</name>
<feature type="chain" id="PRO_0000206493" description="Protein TsgA homolog">
    <location>
        <begin position="1"/>
        <end position="388"/>
    </location>
</feature>
<feature type="transmembrane region" description="Helical" evidence="1">
    <location>
        <begin position="12"/>
        <end position="32"/>
    </location>
</feature>
<feature type="transmembrane region" description="Helical" evidence="1">
    <location>
        <begin position="51"/>
        <end position="71"/>
    </location>
</feature>
<feature type="transmembrane region" description="Helical" evidence="1">
    <location>
        <begin position="77"/>
        <end position="97"/>
    </location>
</feature>
<feature type="transmembrane region" description="Helical" evidence="1">
    <location>
        <begin position="102"/>
        <end position="122"/>
    </location>
</feature>
<feature type="transmembrane region" description="Helical" evidence="1">
    <location>
        <begin position="137"/>
        <end position="157"/>
    </location>
</feature>
<feature type="transmembrane region" description="Helical" evidence="1">
    <location>
        <begin position="163"/>
        <end position="183"/>
    </location>
</feature>
<feature type="transmembrane region" description="Helical" evidence="1">
    <location>
        <begin position="203"/>
        <end position="223"/>
    </location>
</feature>
<feature type="transmembrane region" description="Helical" evidence="1">
    <location>
        <begin position="246"/>
        <end position="266"/>
    </location>
</feature>
<feature type="transmembrane region" description="Helical" evidence="1">
    <location>
        <begin position="272"/>
        <end position="292"/>
    </location>
</feature>
<feature type="transmembrane region" description="Helical" evidence="1">
    <location>
        <begin position="294"/>
        <end position="314"/>
    </location>
</feature>
<feature type="transmembrane region" description="Helical" evidence="1">
    <location>
        <begin position="331"/>
        <end position="351"/>
    </location>
</feature>
<feature type="transmembrane region" description="Helical" evidence="1">
    <location>
        <begin position="356"/>
        <end position="376"/>
    </location>
</feature>
<organism>
    <name type="scientific">Buchnera aphidicola subsp. Baizongia pistaciae (strain Bp)</name>
    <dbReference type="NCBI Taxonomy" id="224915"/>
    <lineage>
        <taxon>Bacteria</taxon>
        <taxon>Pseudomonadati</taxon>
        <taxon>Pseudomonadota</taxon>
        <taxon>Gammaproteobacteria</taxon>
        <taxon>Enterobacterales</taxon>
        <taxon>Erwiniaceae</taxon>
        <taxon>Buchnera</taxon>
    </lineage>
</organism>
<sequence length="388" mass="43940">MINKSNLIGLTCISFLSYALTGALITITGIFLENISKYFNIPITDMGNTFTFLNAGILSSIFISSWITNIINLKTQLIFGFILTIIATLILIFSHNLTYFSISMFMLGIISGITMSIGTYIITNLYTDQTRASMLLLTDSFFSMSGIIFPIITALIISNNMKWYWVYFIIGIIYLIIFLITINTKFPIIYTEISKKRIKTWNFSILCLSISALLYILGQLSFISWMPEYTMKYIHISINQSSKLVSAFWMAYMVGMWIFSFILKFFDLKKTIITLSGISLFLMSLFNIFYDYALLYIIILSLGFFSSAIYTIIITLASQQTPLSSPKTINYILTSGTVGTLLTFIITGPIVQKYGIFSALLVSNILYGIVFFLVIIFATLTKTKPIHD</sequence>
<keyword id="KW-1003">Cell membrane</keyword>
<keyword id="KW-0472">Membrane</keyword>
<keyword id="KW-1185">Reference proteome</keyword>
<keyword id="KW-0812">Transmembrane</keyword>
<keyword id="KW-1133">Transmembrane helix</keyword>
<proteinExistence type="inferred from homology"/>
<gene>
    <name evidence="1" type="primary">tsgA</name>
    <name type="ordered locus">bbp_477</name>
</gene>
<comment type="subcellular location">
    <subcellularLocation>
        <location evidence="1">Cell membrane</location>
        <topology evidence="1">Multi-pass membrane protein</topology>
    </subcellularLocation>
</comment>
<comment type="similarity">
    <text evidence="1">Belongs to the major facilitator superfamily. TsgA family.</text>
</comment>
<accession>Q89A60</accession>
<evidence type="ECO:0000255" key="1">
    <source>
        <dbReference type="HAMAP-Rule" id="MF_01044"/>
    </source>
</evidence>